<proteinExistence type="inferred from homology"/>
<comment type="function">
    <text evidence="1">Located on the platform of the 30S subunit, it bridges several disparate RNA helices of the 16S rRNA. Forms part of the Shine-Dalgarno cleft in the 70S ribosome.</text>
</comment>
<comment type="subunit">
    <text evidence="1">Part of the 30S ribosomal subunit. Interacts with proteins S7 and S18. Binds to IF-3.</text>
</comment>
<comment type="similarity">
    <text evidence="1">Belongs to the universal ribosomal protein uS11 family.</text>
</comment>
<sequence length="127" mass="13369">MAKPTRKRRVKKNIESGVAHIHATFNNTIVMITDVHGNALAWSSAGALGFKGSRKSTPFAAQMAAEAAAKSAQEHGLKTVEVTVKGPGSGRESAIRALAAAGLEVTAIRDVTPVPHNGARPPKRRRV</sequence>
<evidence type="ECO:0000255" key="1">
    <source>
        <dbReference type="HAMAP-Rule" id="MF_01310"/>
    </source>
</evidence>
<evidence type="ECO:0000305" key="2"/>
<protein>
    <recommendedName>
        <fullName evidence="1">Small ribosomal subunit protein uS11</fullName>
    </recommendedName>
    <alternativeName>
        <fullName evidence="2">30S ribosomal protein S11</fullName>
    </alternativeName>
</protein>
<keyword id="KW-0687">Ribonucleoprotein</keyword>
<keyword id="KW-0689">Ribosomal protein</keyword>
<keyword id="KW-0694">RNA-binding</keyword>
<keyword id="KW-0699">rRNA-binding</keyword>
<organism>
    <name type="scientific">Streptococcus pyogenes serotype M28 (strain MGAS6180)</name>
    <dbReference type="NCBI Taxonomy" id="319701"/>
    <lineage>
        <taxon>Bacteria</taxon>
        <taxon>Bacillati</taxon>
        <taxon>Bacillota</taxon>
        <taxon>Bacilli</taxon>
        <taxon>Lactobacillales</taxon>
        <taxon>Streptococcaceae</taxon>
        <taxon>Streptococcus</taxon>
    </lineage>
</organism>
<feature type="chain" id="PRO_0000230434" description="Small ribosomal subunit protein uS11">
    <location>
        <begin position="1"/>
        <end position="127"/>
    </location>
</feature>
<gene>
    <name evidence="1" type="primary">rpsK</name>
    <name type="ordered locus">M28_Spy0068</name>
</gene>
<name>RS11_STRPM</name>
<accession>Q48VS4</accession>
<dbReference type="EMBL" id="CP000056">
    <property type="protein sequence ID" value="AAX71182.1"/>
    <property type="molecule type" value="Genomic_DNA"/>
</dbReference>
<dbReference type="RefSeq" id="WP_001118387.1">
    <property type="nucleotide sequence ID" value="NC_007296.2"/>
</dbReference>
<dbReference type="SMR" id="Q48VS4"/>
<dbReference type="GeneID" id="93825319"/>
<dbReference type="KEGG" id="spb:M28_Spy0068"/>
<dbReference type="HOGENOM" id="CLU_072439_5_0_9"/>
<dbReference type="GO" id="GO:1990904">
    <property type="term" value="C:ribonucleoprotein complex"/>
    <property type="evidence" value="ECO:0007669"/>
    <property type="project" value="UniProtKB-KW"/>
</dbReference>
<dbReference type="GO" id="GO:0005840">
    <property type="term" value="C:ribosome"/>
    <property type="evidence" value="ECO:0007669"/>
    <property type="project" value="UniProtKB-KW"/>
</dbReference>
<dbReference type="GO" id="GO:0019843">
    <property type="term" value="F:rRNA binding"/>
    <property type="evidence" value="ECO:0007669"/>
    <property type="project" value="UniProtKB-UniRule"/>
</dbReference>
<dbReference type="GO" id="GO:0003735">
    <property type="term" value="F:structural constituent of ribosome"/>
    <property type="evidence" value="ECO:0007669"/>
    <property type="project" value="InterPro"/>
</dbReference>
<dbReference type="GO" id="GO:0006412">
    <property type="term" value="P:translation"/>
    <property type="evidence" value="ECO:0007669"/>
    <property type="project" value="UniProtKB-UniRule"/>
</dbReference>
<dbReference type="FunFam" id="3.30.420.80:FF:000001">
    <property type="entry name" value="30S ribosomal protein S11"/>
    <property type="match status" value="1"/>
</dbReference>
<dbReference type="Gene3D" id="3.30.420.80">
    <property type="entry name" value="Ribosomal protein S11"/>
    <property type="match status" value="1"/>
</dbReference>
<dbReference type="HAMAP" id="MF_01310">
    <property type="entry name" value="Ribosomal_uS11"/>
    <property type="match status" value="1"/>
</dbReference>
<dbReference type="InterPro" id="IPR001971">
    <property type="entry name" value="Ribosomal_uS11"/>
</dbReference>
<dbReference type="InterPro" id="IPR019981">
    <property type="entry name" value="Ribosomal_uS11_bac-type"/>
</dbReference>
<dbReference type="InterPro" id="IPR018102">
    <property type="entry name" value="Ribosomal_uS11_CS"/>
</dbReference>
<dbReference type="InterPro" id="IPR036967">
    <property type="entry name" value="Ribosomal_uS11_sf"/>
</dbReference>
<dbReference type="NCBIfam" id="NF003698">
    <property type="entry name" value="PRK05309.1"/>
    <property type="match status" value="1"/>
</dbReference>
<dbReference type="NCBIfam" id="TIGR03632">
    <property type="entry name" value="uS11_bact"/>
    <property type="match status" value="1"/>
</dbReference>
<dbReference type="PANTHER" id="PTHR11759">
    <property type="entry name" value="40S RIBOSOMAL PROTEIN S14/30S RIBOSOMAL PROTEIN S11"/>
    <property type="match status" value="1"/>
</dbReference>
<dbReference type="Pfam" id="PF00411">
    <property type="entry name" value="Ribosomal_S11"/>
    <property type="match status" value="1"/>
</dbReference>
<dbReference type="PIRSF" id="PIRSF002131">
    <property type="entry name" value="Ribosomal_S11"/>
    <property type="match status" value="1"/>
</dbReference>
<dbReference type="SUPFAM" id="SSF53137">
    <property type="entry name" value="Translational machinery components"/>
    <property type="match status" value="1"/>
</dbReference>
<dbReference type="PROSITE" id="PS00054">
    <property type="entry name" value="RIBOSOMAL_S11"/>
    <property type="match status" value="1"/>
</dbReference>
<reference key="1">
    <citation type="journal article" date="2005" name="J. Infect. Dis.">
        <title>Genome sequence of a serotype M28 strain of group A Streptococcus: potential new insights into puerperal sepsis and bacterial disease specificity.</title>
        <authorList>
            <person name="Green N.M."/>
            <person name="Zhang S."/>
            <person name="Porcella S.F."/>
            <person name="Nagiec M.J."/>
            <person name="Barbian K.D."/>
            <person name="Beres S.B."/>
            <person name="Lefebvre R.B."/>
            <person name="Musser J.M."/>
        </authorList>
    </citation>
    <scope>NUCLEOTIDE SEQUENCE [LARGE SCALE GENOMIC DNA]</scope>
    <source>
        <strain>MGAS6180</strain>
    </source>
</reference>